<evidence type="ECO:0000255" key="1">
    <source>
        <dbReference type="HAMAP-Rule" id="MF_00130"/>
    </source>
</evidence>
<keyword id="KW-0963">Cytoplasm</keyword>
<keyword id="KW-0227">DNA damage</keyword>
<keyword id="KW-0233">DNA recombination</keyword>
<keyword id="KW-0234">DNA repair</keyword>
<keyword id="KW-0255">Endonuclease</keyword>
<keyword id="KW-0378">Hydrolase</keyword>
<keyword id="KW-0460">Magnesium</keyword>
<keyword id="KW-0479">Metal-binding</keyword>
<keyword id="KW-0540">Nuclease</keyword>
<keyword id="KW-1185">Reference proteome</keyword>
<organism>
    <name type="scientific">Levilactobacillus brevis (strain ATCC 367 / BCRC 12310 / CIP 105137 / JCM 1170 / LMG 11437 / NCIMB 947 / NCTC 947)</name>
    <name type="common">Lactobacillus brevis</name>
    <dbReference type="NCBI Taxonomy" id="387344"/>
    <lineage>
        <taxon>Bacteria</taxon>
        <taxon>Bacillati</taxon>
        <taxon>Bacillota</taxon>
        <taxon>Bacilli</taxon>
        <taxon>Lactobacillales</taxon>
        <taxon>Lactobacillaceae</taxon>
        <taxon>Levilactobacillus</taxon>
    </lineage>
</organism>
<dbReference type="EC" id="3.1.21.10" evidence="1"/>
<dbReference type="EMBL" id="CP000416">
    <property type="protein sequence ID" value="ABJ63992.1"/>
    <property type="molecule type" value="Genomic_DNA"/>
</dbReference>
<dbReference type="RefSeq" id="WP_011667778.1">
    <property type="nucleotide sequence ID" value="NC_008497.1"/>
</dbReference>
<dbReference type="SMR" id="Q03S30"/>
<dbReference type="STRING" id="387344.LVIS_0850"/>
<dbReference type="GeneID" id="56992940"/>
<dbReference type="KEGG" id="lbr:LVIS_0850"/>
<dbReference type="eggNOG" id="COG3331">
    <property type="taxonomic scope" value="Bacteria"/>
</dbReference>
<dbReference type="HOGENOM" id="CLU_096340_0_0_9"/>
<dbReference type="Proteomes" id="UP000001652">
    <property type="component" value="Chromosome"/>
</dbReference>
<dbReference type="GO" id="GO:0005737">
    <property type="term" value="C:cytoplasm"/>
    <property type="evidence" value="ECO:0007669"/>
    <property type="project" value="UniProtKB-SubCell"/>
</dbReference>
<dbReference type="GO" id="GO:0004519">
    <property type="term" value="F:endonuclease activity"/>
    <property type="evidence" value="ECO:0007669"/>
    <property type="project" value="UniProtKB-UniRule"/>
</dbReference>
<dbReference type="GO" id="GO:0000287">
    <property type="term" value="F:magnesium ion binding"/>
    <property type="evidence" value="ECO:0007669"/>
    <property type="project" value="UniProtKB-UniRule"/>
</dbReference>
<dbReference type="GO" id="GO:0003676">
    <property type="term" value="F:nucleic acid binding"/>
    <property type="evidence" value="ECO:0007669"/>
    <property type="project" value="InterPro"/>
</dbReference>
<dbReference type="GO" id="GO:0007059">
    <property type="term" value="P:chromosome segregation"/>
    <property type="evidence" value="ECO:0007669"/>
    <property type="project" value="UniProtKB-UniRule"/>
</dbReference>
<dbReference type="GO" id="GO:0006310">
    <property type="term" value="P:DNA recombination"/>
    <property type="evidence" value="ECO:0007669"/>
    <property type="project" value="UniProtKB-UniRule"/>
</dbReference>
<dbReference type="GO" id="GO:0006281">
    <property type="term" value="P:DNA repair"/>
    <property type="evidence" value="ECO:0007669"/>
    <property type="project" value="UniProtKB-UniRule"/>
</dbReference>
<dbReference type="CDD" id="cd22354">
    <property type="entry name" value="RecU-like"/>
    <property type="match status" value="1"/>
</dbReference>
<dbReference type="Gene3D" id="3.40.1350.10">
    <property type="match status" value="1"/>
</dbReference>
<dbReference type="HAMAP" id="MF_00130">
    <property type="entry name" value="RecU"/>
    <property type="match status" value="1"/>
</dbReference>
<dbReference type="InterPro" id="IPR004612">
    <property type="entry name" value="Resolv_RecU"/>
</dbReference>
<dbReference type="InterPro" id="IPR011335">
    <property type="entry name" value="Restrct_endonuc-II-like"/>
</dbReference>
<dbReference type="InterPro" id="IPR011856">
    <property type="entry name" value="tRNA_endonuc-like_dom_sf"/>
</dbReference>
<dbReference type="NCBIfam" id="NF002584">
    <property type="entry name" value="PRK02234.1-5"/>
    <property type="match status" value="1"/>
</dbReference>
<dbReference type="NCBIfam" id="TIGR00648">
    <property type="entry name" value="recU"/>
    <property type="match status" value="1"/>
</dbReference>
<dbReference type="Pfam" id="PF03838">
    <property type="entry name" value="RecU"/>
    <property type="match status" value="1"/>
</dbReference>
<dbReference type="PIRSF" id="PIRSF037785">
    <property type="entry name" value="RecU"/>
    <property type="match status" value="1"/>
</dbReference>
<dbReference type="SUPFAM" id="SSF52980">
    <property type="entry name" value="Restriction endonuclease-like"/>
    <property type="match status" value="1"/>
</dbReference>
<sequence>MTIRYPNGHAYRAPAKKIGSQFSSTNTNYGKRGMTLEEELNESNTYYEVNGVAVVHKKPTPIRIVKVDYPKRSAAVIKEAYFSTASTTDYNGVYRGHYLDFDAKETRNTTSFPLQNFHQHQIDHMRACTTQGGICFAIIKFVTRQEIYLYRAQDLFTFWDAQQQGGRKSIPYATIAQDGIQIPAELQLPVPYLKAVDQLLS</sequence>
<protein>
    <recommendedName>
        <fullName evidence="1">Holliday junction resolvase RecU</fullName>
        <ecNumber evidence="1">3.1.21.10</ecNumber>
    </recommendedName>
    <alternativeName>
        <fullName evidence="1">Recombination protein U homolog</fullName>
    </alternativeName>
</protein>
<proteinExistence type="inferred from homology"/>
<accession>Q03S30</accession>
<comment type="function">
    <text evidence="1">Endonuclease that resolves Holliday junction intermediates in genetic recombination. Cleaves mobile four-strand junctions by introducing symmetrical nicks in paired strands. Promotes annealing of linear ssDNA with homologous dsDNA. Required for DNA repair, homologous recombination and chromosome segregation.</text>
</comment>
<comment type="catalytic activity">
    <reaction evidence="1">
        <text>Endonucleolytic cleavage at a junction such as a reciprocal single-stranded crossover between two homologous DNA duplexes (Holliday junction).</text>
        <dbReference type="EC" id="3.1.21.10"/>
    </reaction>
</comment>
<comment type="cofactor">
    <cofactor evidence="1">
        <name>Mg(2+)</name>
        <dbReference type="ChEBI" id="CHEBI:18420"/>
    </cofactor>
    <text evidence="1">Binds 1 Mg(2+) ion per subunit.</text>
</comment>
<comment type="subcellular location">
    <subcellularLocation>
        <location evidence="1">Cytoplasm</location>
    </subcellularLocation>
</comment>
<comment type="similarity">
    <text evidence="1">Belongs to the RecU family.</text>
</comment>
<name>RECU_LEVBA</name>
<reference key="1">
    <citation type="journal article" date="2006" name="Proc. Natl. Acad. Sci. U.S.A.">
        <title>Comparative genomics of the lactic acid bacteria.</title>
        <authorList>
            <person name="Makarova K.S."/>
            <person name="Slesarev A."/>
            <person name="Wolf Y.I."/>
            <person name="Sorokin A."/>
            <person name="Mirkin B."/>
            <person name="Koonin E.V."/>
            <person name="Pavlov A."/>
            <person name="Pavlova N."/>
            <person name="Karamychev V."/>
            <person name="Polouchine N."/>
            <person name="Shakhova V."/>
            <person name="Grigoriev I."/>
            <person name="Lou Y."/>
            <person name="Rohksar D."/>
            <person name="Lucas S."/>
            <person name="Huang K."/>
            <person name="Goodstein D.M."/>
            <person name="Hawkins T."/>
            <person name="Plengvidhya V."/>
            <person name="Welker D."/>
            <person name="Hughes J."/>
            <person name="Goh Y."/>
            <person name="Benson A."/>
            <person name="Baldwin K."/>
            <person name="Lee J.-H."/>
            <person name="Diaz-Muniz I."/>
            <person name="Dosti B."/>
            <person name="Smeianov V."/>
            <person name="Wechter W."/>
            <person name="Barabote R."/>
            <person name="Lorca G."/>
            <person name="Altermann E."/>
            <person name="Barrangou R."/>
            <person name="Ganesan B."/>
            <person name="Xie Y."/>
            <person name="Rawsthorne H."/>
            <person name="Tamir D."/>
            <person name="Parker C."/>
            <person name="Breidt F."/>
            <person name="Broadbent J.R."/>
            <person name="Hutkins R."/>
            <person name="O'Sullivan D."/>
            <person name="Steele J."/>
            <person name="Unlu G."/>
            <person name="Saier M.H. Jr."/>
            <person name="Klaenhammer T."/>
            <person name="Richardson P."/>
            <person name="Kozyavkin S."/>
            <person name="Weimer B.C."/>
            <person name="Mills D.A."/>
        </authorList>
    </citation>
    <scope>NUCLEOTIDE SEQUENCE [LARGE SCALE GENOMIC DNA]</scope>
    <source>
        <strain>ATCC 367 / BCRC 12310 / CIP 105137 / JCM 1170 / LMG 11437 / NCIMB 947 / NCTC 947</strain>
    </source>
</reference>
<gene>
    <name evidence="1" type="primary">recU</name>
    <name type="ordered locus">LVIS_0850</name>
</gene>
<feature type="chain" id="PRO_1000016726" description="Holliday junction resolvase RecU">
    <location>
        <begin position="1"/>
        <end position="201"/>
    </location>
</feature>
<feature type="binding site" evidence="1">
    <location>
        <position position="87"/>
    </location>
    <ligand>
        <name>Mg(2+)</name>
        <dbReference type="ChEBI" id="CHEBI:18420"/>
    </ligand>
</feature>
<feature type="binding site" evidence="1">
    <location>
        <position position="89"/>
    </location>
    <ligand>
        <name>Mg(2+)</name>
        <dbReference type="ChEBI" id="CHEBI:18420"/>
    </ligand>
</feature>
<feature type="binding site" evidence="1">
    <location>
        <position position="102"/>
    </location>
    <ligand>
        <name>Mg(2+)</name>
        <dbReference type="ChEBI" id="CHEBI:18420"/>
    </ligand>
</feature>
<feature type="binding site" evidence="1">
    <location>
        <position position="121"/>
    </location>
    <ligand>
        <name>Mg(2+)</name>
        <dbReference type="ChEBI" id="CHEBI:18420"/>
    </ligand>
</feature>
<feature type="site" description="Transition state stabilizer" evidence="1">
    <location>
        <position position="104"/>
    </location>
</feature>